<keyword id="KW-0002">3D-structure</keyword>
<keyword id="KW-0025">Alternative splicing</keyword>
<keyword id="KW-0106">Calcium</keyword>
<keyword id="KW-1003">Cell membrane</keyword>
<keyword id="KW-0963">Cytoplasm</keyword>
<keyword id="KW-0333">Golgi apparatus</keyword>
<keyword id="KW-0449">Lipoprotein</keyword>
<keyword id="KW-0472">Membrane</keyword>
<keyword id="KW-0479">Metal-binding</keyword>
<keyword id="KW-0519">Myristate</keyword>
<keyword id="KW-0582">Pharmaceutical</keyword>
<keyword id="KW-1267">Proteomics identification</keyword>
<keyword id="KW-1185">Reference proteome</keyword>
<keyword id="KW-0677">Repeat</keyword>
<keyword id="KW-0770">Synapse</keyword>
<feature type="initiator methionine" description="Removed" evidence="9">
    <location>
        <position position="1"/>
    </location>
</feature>
<feature type="chain" id="PRO_0000073788" description="Neuronal calcium sensor 1">
    <location>
        <begin position="2"/>
        <end position="190"/>
    </location>
</feature>
<feature type="domain" description="EF-hand 1" evidence="13">
    <location>
        <begin position="24"/>
        <end position="59"/>
    </location>
</feature>
<feature type="domain" description="EF-hand 2" evidence="3">
    <location>
        <begin position="60"/>
        <end position="95"/>
    </location>
</feature>
<feature type="domain" description="EF-hand 3" evidence="3">
    <location>
        <begin position="96"/>
        <end position="131"/>
    </location>
</feature>
<feature type="domain" description="EF-hand 4" evidence="3">
    <location>
        <begin position="144"/>
        <end position="179"/>
    </location>
</feature>
<feature type="region of interest" description="Interaction with IL1RAPL1" evidence="6">
    <location>
        <begin position="174"/>
        <end position="190"/>
    </location>
</feature>
<feature type="binding site" evidence="3">
    <location>
        <position position="73"/>
    </location>
    <ligand>
        <name>Ca(2+)</name>
        <dbReference type="ChEBI" id="CHEBI:29108"/>
        <label>1</label>
    </ligand>
</feature>
<feature type="binding site" evidence="3">
    <location>
        <position position="75"/>
    </location>
    <ligand>
        <name>Ca(2+)</name>
        <dbReference type="ChEBI" id="CHEBI:29108"/>
        <label>1</label>
    </ligand>
</feature>
<feature type="binding site" evidence="3">
    <location>
        <position position="77"/>
    </location>
    <ligand>
        <name>Ca(2+)</name>
        <dbReference type="ChEBI" id="CHEBI:29108"/>
        <label>1</label>
    </ligand>
</feature>
<feature type="binding site" evidence="3">
    <location>
        <position position="79"/>
    </location>
    <ligand>
        <name>Ca(2+)</name>
        <dbReference type="ChEBI" id="CHEBI:29108"/>
        <label>1</label>
    </ligand>
</feature>
<feature type="binding site" evidence="2">
    <location>
        <position position="81"/>
    </location>
    <ligand>
        <name>Ca(2+)</name>
        <dbReference type="ChEBI" id="CHEBI:29108"/>
        <label>1</label>
    </ligand>
</feature>
<feature type="binding site" evidence="3">
    <location>
        <position position="84"/>
    </location>
    <ligand>
        <name>Ca(2+)</name>
        <dbReference type="ChEBI" id="CHEBI:29108"/>
        <label>1</label>
    </ligand>
</feature>
<feature type="binding site" evidence="3">
    <location>
        <position position="109"/>
    </location>
    <ligand>
        <name>Ca(2+)</name>
        <dbReference type="ChEBI" id="CHEBI:29108"/>
        <label>2</label>
    </ligand>
</feature>
<feature type="binding site" evidence="3">
    <location>
        <position position="111"/>
    </location>
    <ligand>
        <name>Ca(2+)</name>
        <dbReference type="ChEBI" id="CHEBI:29108"/>
        <label>2</label>
    </ligand>
</feature>
<feature type="binding site" evidence="3">
    <location>
        <position position="113"/>
    </location>
    <ligand>
        <name>Ca(2+)</name>
        <dbReference type="ChEBI" id="CHEBI:29108"/>
        <label>2</label>
    </ligand>
</feature>
<feature type="binding site" evidence="3">
    <location>
        <position position="115"/>
    </location>
    <ligand>
        <name>Ca(2+)</name>
        <dbReference type="ChEBI" id="CHEBI:29108"/>
        <label>2</label>
    </ligand>
</feature>
<feature type="binding site" evidence="3">
    <location>
        <position position="120"/>
    </location>
    <ligand>
        <name>Ca(2+)</name>
        <dbReference type="ChEBI" id="CHEBI:29108"/>
        <label>2</label>
    </ligand>
</feature>
<feature type="binding site" evidence="3">
    <location>
        <position position="157"/>
    </location>
    <ligand>
        <name>Ca(2+)</name>
        <dbReference type="ChEBI" id="CHEBI:29108"/>
        <label>3</label>
    </ligand>
</feature>
<feature type="binding site" evidence="3">
    <location>
        <position position="159"/>
    </location>
    <ligand>
        <name>Ca(2+)</name>
        <dbReference type="ChEBI" id="CHEBI:29108"/>
        <label>3</label>
    </ligand>
</feature>
<feature type="binding site" evidence="3">
    <location>
        <position position="161"/>
    </location>
    <ligand>
        <name>Ca(2+)</name>
        <dbReference type="ChEBI" id="CHEBI:29108"/>
        <label>3</label>
    </ligand>
</feature>
<feature type="binding site" evidence="3">
    <location>
        <position position="163"/>
    </location>
    <ligand>
        <name>Ca(2+)</name>
        <dbReference type="ChEBI" id="CHEBI:29108"/>
        <label>3</label>
    </ligand>
</feature>
<feature type="binding site" evidence="3">
    <location>
        <position position="168"/>
    </location>
    <ligand>
        <name>Ca(2+)</name>
        <dbReference type="ChEBI" id="CHEBI:29108"/>
        <label>3</label>
    </ligand>
</feature>
<feature type="lipid moiety-binding region" description="N-myristoyl glycine" evidence="9">
    <location>
        <position position="2"/>
    </location>
</feature>
<feature type="splice variant" id="VSP_046312" description="In isoform 2." evidence="12">
    <original>MGKSNSKLKPEVVEELTRKTYF</original>
    <variation>MATI</variation>
    <location>
        <begin position="1"/>
        <end position="22"/>
    </location>
</feature>
<feature type="mutagenesis site" description="No effect on interaction with RIC8A." evidence="10">
    <original>G</original>
    <variation>A</variation>
    <location>
        <position position="2"/>
    </location>
</feature>
<feature type="mutagenesis site" description="Reduces calcium binding; when associated with A-117 or A-165. Abolishes calcium binding; when associated with A-117 and A-165." evidence="4">
    <original>E</original>
    <variation>T</variation>
    <location>
        <position position="81"/>
    </location>
</feature>
<feature type="mutagenesis site" description="Reduces calcium binding; when associated with T-81. Abolishes calcium binding; when associated with T-81 and A-165." evidence="4">
    <original>T</original>
    <variation>A</variation>
    <location>
        <position position="117"/>
    </location>
</feature>
<feature type="mutagenesis site" description="Reduces calcium binding; when associated with A-117. Abolishes calcium binding; when associated with T-81 and A-117." evidence="4">
    <original>T</original>
    <variation>A</variation>
    <location>
        <position position="165"/>
    </location>
</feature>
<feature type="sequence conflict" description="In Ref. 4; AAF01804." evidence="13" ref="4">
    <original>S</original>
    <variation>P</variation>
    <location>
        <position position="90"/>
    </location>
</feature>
<feature type="sequence conflict" description="In Ref. 4; AAF01804." evidence="13" ref="4">
    <original>S</original>
    <variation>P</variation>
    <location>
        <position position="178"/>
    </location>
</feature>
<feature type="helix" evidence="15">
    <location>
        <begin position="3"/>
        <end position="5"/>
    </location>
</feature>
<feature type="helix" evidence="18">
    <location>
        <begin position="10"/>
        <end position="18"/>
    </location>
</feature>
<feature type="strand" evidence="18">
    <location>
        <begin position="20"/>
        <end position="22"/>
    </location>
</feature>
<feature type="helix" evidence="18">
    <location>
        <begin position="24"/>
        <end position="37"/>
    </location>
</feature>
<feature type="strand" evidence="18">
    <location>
        <begin position="41"/>
        <end position="43"/>
    </location>
</feature>
<feature type="helix" evidence="18">
    <location>
        <begin position="45"/>
        <end position="55"/>
    </location>
</feature>
<feature type="helix" evidence="18">
    <location>
        <begin position="62"/>
        <end position="72"/>
    </location>
</feature>
<feature type="strand" evidence="18">
    <location>
        <begin position="77"/>
        <end position="81"/>
    </location>
</feature>
<feature type="helix" evidence="18">
    <location>
        <begin position="82"/>
        <end position="94"/>
    </location>
</feature>
<feature type="helix" evidence="18">
    <location>
        <begin position="97"/>
        <end position="108"/>
    </location>
</feature>
<feature type="strand" evidence="15">
    <location>
        <begin position="109"/>
        <end position="111"/>
    </location>
</feature>
<feature type="strand" evidence="18">
    <location>
        <begin position="113"/>
        <end position="116"/>
    </location>
</feature>
<feature type="helix" evidence="18">
    <location>
        <begin position="118"/>
        <end position="132"/>
    </location>
</feature>
<feature type="helix" evidence="17">
    <location>
        <begin position="133"/>
        <end position="135"/>
    </location>
</feature>
<feature type="helix" evidence="18">
    <location>
        <begin position="139"/>
        <end position="141"/>
    </location>
</feature>
<feature type="strand" evidence="16">
    <location>
        <begin position="142"/>
        <end position="144"/>
    </location>
</feature>
<feature type="helix" evidence="18">
    <location>
        <begin position="145"/>
        <end position="156"/>
    </location>
</feature>
<feature type="helix" evidence="15">
    <location>
        <begin position="157"/>
        <end position="159"/>
    </location>
</feature>
<feature type="strand" evidence="16">
    <location>
        <begin position="161"/>
        <end position="164"/>
    </location>
</feature>
<feature type="helix" evidence="18">
    <location>
        <begin position="166"/>
        <end position="170"/>
    </location>
</feature>
<feature type="helix" evidence="16">
    <location>
        <begin position="177"/>
        <end position="183"/>
    </location>
</feature>
<reference key="1">
    <citation type="submission" date="1995-01" db="EMBL/GenBank/DDBJ databases">
        <title>Frequenin-like Ca2+-binding protein (flup) modulates fast inactivation of mammalian presynaptic A-type K-channel.</title>
        <authorList>
            <person name="Lindemeier J.R."/>
            <person name="Hauenschild A."/>
            <person name="Pongs O."/>
        </authorList>
    </citation>
    <scope>NUCLEOTIDE SEQUENCE [MRNA] (ISOFORM 1)</scope>
</reference>
<reference key="2">
    <citation type="submission" date="1999-03" db="EMBL/GenBank/DDBJ databases">
        <title>Cloning of a new human cDNA homologous to Rattus norvegicus neuronal calcium sensor (NCS-1).</title>
        <authorList>
            <person name="Bao X.G."/>
            <person name="Yu L."/>
            <person name="Zhao S.Y."/>
        </authorList>
    </citation>
    <scope>NUCLEOTIDE SEQUENCE [MRNA] (ISOFORM 1)</scope>
</reference>
<reference key="3">
    <citation type="submission" date="1999-06" db="UniProtKB">
        <authorList>
            <person name="Nef S."/>
        </authorList>
    </citation>
    <scope>NUCLEOTIDE SEQUENCE [MRNA] (ISOFORM 1)</scope>
</reference>
<reference key="4">
    <citation type="submission" date="1999-09" db="EMBL/GenBank/DDBJ databases">
        <title>Sequence of human frequenin.</title>
        <authorList>
            <person name="Pongs O."/>
            <person name="Hauenschild A."/>
            <person name="Dannenberg J."/>
        </authorList>
    </citation>
    <scope>NUCLEOTIDE SEQUENCE [MRNA] (ISOFORM 1)</scope>
</reference>
<reference key="5">
    <citation type="journal article" date="2004" name="Nature">
        <title>DNA sequence and analysis of human chromosome 9.</title>
        <authorList>
            <person name="Humphray S.J."/>
            <person name="Oliver K."/>
            <person name="Hunt A.R."/>
            <person name="Plumb R.W."/>
            <person name="Loveland J.E."/>
            <person name="Howe K.L."/>
            <person name="Andrews T.D."/>
            <person name="Searle S."/>
            <person name="Hunt S.E."/>
            <person name="Scott C.E."/>
            <person name="Jones M.C."/>
            <person name="Ainscough R."/>
            <person name="Almeida J.P."/>
            <person name="Ambrose K.D."/>
            <person name="Ashwell R.I.S."/>
            <person name="Babbage A.K."/>
            <person name="Babbage S."/>
            <person name="Bagguley C.L."/>
            <person name="Bailey J."/>
            <person name="Banerjee R."/>
            <person name="Barker D.J."/>
            <person name="Barlow K.F."/>
            <person name="Bates K."/>
            <person name="Beasley H."/>
            <person name="Beasley O."/>
            <person name="Bird C.P."/>
            <person name="Bray-Allen S."/>
            <person name="Brown A.J."/>
            <person name="Brown J.Y."/>
            <person name="Burford D."/>
            <person name="Burrill W."/>
            <person name="Burton J."/>
            <person name="Carder C."/>
            <person name="Carter N.P."/>
            <person name="Chapman J.C."/>
            <person name="Chen Y."/>
            <person name="Clarke G."/>
            <person name="Clark S.Y."/>
            <person name="Clee C.M."/>
            <person name="Clegg S."/>
            <person name="Collier R.E."/>
            <person name="Corby N."/>
            <person name="Crosier M."/>
            <person name="Cummings A.T."/>
            <person name="Davies J."/>
            <person name="Dhami P."/>
            <person name="Dunn M."/>
            <person name="Dutta I."/>
            <person name="Dyer L.W."/>
            <person name="Earthrowl M.E."/>
            <person name="Faulkner L."/>
            <person name="Fleming C.J."/>
            <person name="Frankish A."/>
            <person name="Frankland J.A."/>
            <person name="French L."/>
            <person name="Fricker D.G."/>
            <person name="Garner P."/>
            <person name="Garnett J."/>
            <person name="Ghori J."/>
            <person name="Gilbert J.G.R."/>
            <person name="Glison C."/>
            <person name="Grafham D.V."/>
            <person name="Gribble S."/>
            <person name="Griffiths C."/>
            <person name="Griffiths-Jones S."/>
            <person name="Grocock R."/>
            <person name="Guy J."/>
            <person name="Hall R.E."/>
            <person name="Hammond S."/>
            <person name="Harley J.L."/>
            <person name="Harrison E.S.I."/>
            <person name="Hart E.A."/>
            <person name="Heath P.D."/>
            <person name="Henderson C.D."/>
            <person name="Hopkins B.L."/>
            <person name="Howard P.J."/>
            <person name="Howden P.J."/>
            <person name="Huckle E."/>
            <person name="Johnson C."/>
            <person name="Johnson D."/>
            <person name="Joy A.A."/>
            <person name="Kay M."/>
            <person name="Keenan S."/>
            <person name="Kershaw J.K."/>
            <person name="Kimberley A.M."/>
            <person name="King A."/>
            <person name="Knights A."/>
            <person name="Laird G.K."/>
            <person name="Langford C."/>
            <person name="Lawlor S."/>
            <person name="Leongamornlert D.A."/>
            <person name="Leversha M."/>
            <person name="Lloyd C."/>
            <person name="Lloyd D.M."/>
            <person name="Lovell J."/>
            <person name="Martin S."/>
            <person name="Mashreghi-Mohammadi M."/>
            <person name="Matthews L."/>
            <person name="McLaren S."/>
            <person name="McLay K.E."/>
            <person name="McMurray A."/>
            <person name="Milne S."/>
            <person name="Nickerson T."/>
            <person name="Nisbett J."/>
            <person name="Nordsiek G."/>
            <person name="Pearce A.V."/>
            <person name="Peck A.I."/>
            <person name="Porter K.M."/>
            <person name="Pandian R."/>
            <person name="Pelan S."/>
            <person name="Phillimore B."/>
            <person name="Povey S."/>
            <person name="Ramsey Y."/>
            <person name="Rand V."/>
            <person name="Scharfe M."/>
            <person name="Sehra H.K."/>
            <person name="Shownkeen R."/>
            <person name="Sims S.K."/>
            <person name="Skuce C.D."/>
            <person name="Smith M."/>
            <person name="Steward C.A."/>
            <person name="Swarbreck D."/>
            <person name="Sycamore N."/>
            <person name="Tester J."/>
            <person name="Thorpe A."/>
            <person name="Tracey A."/>
            <person name="Tromans A."/>
            <person name="Thomas D.W."/>
            <person name="Wall M."/>
            <person name="Wallis J.M."/>
            <person name="West A.P."/>
            <person name="Whitehead S.L."/>
            <person name="Willey D.L."/>
            <person name="Williams S.A."/>
            <person name="Wilming L."/>
            <person name="Wray P.W."/>
            <person name="Young L."/>
            <person name="Ashurst J.L."/>
            <person name="Coulson A."/>
            <person name="Blocker H."/>
            <person name="Durbin R.M."/>
            <person name="Sulston J.E."/>
            <person name="Hubbard T."/>
            <person name="Jackson M.J."/>
            <person name="Bentley D.R."/>
            <person name="Beck S."/>
            <person name="Rogers J."/>
            <person name="Dunham I."/>
        </authorList>
    </citation>
    <scope>NUCLEOTIDE SEQUENCE [LARGE SCALE GENOMIC DNA]</scope>
</reference>
<reference key="6">
    <citation type="journal article" date="2004" name="Genome Res.">
        <title>The status, quality, and expansion of the NIH full-length cDNA project: the Mammalian Gene Collection (MGC).</title>
        <authorList>
            <consortium name="The MGC Project Team"/>
        </authorList>
    </citation>
    <scope>NUCLEOTIDE SEQUENCE [LARGE SCALE MRNA] (ISOFORMS 1 AND 2)</scope>
    <source>
        <tissue>Ovary</tissue>
        <tissue>Spinal ganglion</tissue>
    </source>
</reference>
<reference key="7">
    <citation type="journal article" date="2001" name="Proc. Natl. Acad. Sci. U.S.A.">
        <title>A role for frequenin, a Ca2+-binding protein, as a regulator of Kv4 K+-currents.</title>
        <authorList>
            <person name="Nakamura T.Y."/>
            <person name="Pountney D.J."/>
            <person name="Ozaita A."/>
            <person name="Nandi S."/>
            <person name="Ueda S."/>
            <person name="Rudy B."/>
            <person name="Coetzee W.A."/>
        </authorList>
    </citation>
    <scope>INTERACTION WITH KCND2</scope>
</reference>
<reference key="8">
    <citation type="journal article" date="2003" name="Hum. Mol. Genet.">
        <title>IL1 receptor accessory protein like, a protein involved in X-linked mental retardation, interacts with Neuronal Calcium Sensor-1 and regulates exocytosis.</title>
        <authorList>
            <person name="Bahi N."/>
            <person name="Friocourt G."/>
            <person name="Carrie A."/>
            <person name="Graham M.E."/>
            <person name="Weiss J.L."/>
            <person name="Chafey P."/>
            <person name="Fauchereau F."/>
            <person name="Burgoyne R.D."/>
            <person name="Chelly J."/>
        </authorList>
    </citation>
    <scope>INTERACTION WITH IL1RAPL1</scope>
</reference>
<reference key="9">
    <citation type="journal article" date="2007" name="Traffic">
        <title>Specificity, promiscuity and localization of ARF protein interactions with NCS-1 and phosphatidylinositol-4 kinase-III beta.</title>
        <authorList>
            <person name="Haynes L.P."/>
            <person name="Sherwood M.W."/>
            <person name="Dolman N.J."/>
            <person name="Burgoyne R.D."/>
        </authorList>
    </citation>
    <scope>INTERACTION WITH ARF1; ARF3; ARF5 AND ARF6</scope>
    <scope>SUBCELLULAR LOCATION</scope>
</reference>
<reference key="10">
    <citation type="journal article" date="2011" name="BMC Syst. Biol.">
        <title>Initial characterization of the human central proteome.</title>
        <authorList>
            <person name="Burkard T.R."/>
            <person name="Planyavsky M."/>
            <person name="Kaupe I."/>
            <person name="Breitwieser F.P."/>
            <person name="Buerckstuemmer T."/>
            <person name="Bennett K.L."/>
            <person name="Superti-Furga G."/>
            <person name="Colinge J."/>
        </authorList>
    </citation>
    <scope>IDENTIFICATION BY MASS SPECTROMETRY [LARGE SCALE ANALYSIS]</scope>
</reference>
<reference key="11">
    <citation type="journal article" date="2014" name="J. Cell Sci.">
        <title>The guanine-exchange factor Ric8a binds to the Ca sensor NCS-1 to regulate synapse number and neurotransmitter release.</title>
        <authorList>
            <person name="Romero-Pozuelo J."/>
            <person name="Dason J.S."/>
            <person name="Mansilla A."/>
            <person name="Banos-Mateos S."/>
            <person name="Sardina J.L."/>
            <person name="Chaves-Sanjuan A."/>
            <person name="Jurado-Gomez J."/>
            <person name="Santana E."/>
            <person name="Atwood H.L."/>
            <person name="Hernandez-Hernandez A."/>
            <person name="Sanchez-Barrena M.J."/>
            <person name="Ferrus A."/>
        </authorList>
    </citation>
    <scope>INTERACTION WITH RIC8A</scope>
</reference>
<reference key="12">
    <citation type="journal article" date="2014" name="Nat. Commun.">
        <title>Global profiling of co- and post-translationally N-myristoylated proteomes in human cells.</title>
        <authorList>
            <person name="Thinon E."/>
            <person name="Serwa R.A."/>
            <person name="Broncel M."/>
            <person name="Brannigan J.A."/>
            <person name="Brassat U."/>
            <person name="Wright M.H."/>
            <person name="Heal W.P."/>
            <person name="Wilkinson A.J."/>
            <person name="Mann D.J."/>
            <person name="Tate E.W."/>
        </authorList>
    </citation>
    <scope>MYRISTOYLATION AT GLY-2</scope>
    <scope>CLEAVAGE OF INITIATOR METHIONINE</scope>
    <scope>IDENTIFICATION BY MASS SPECTROMETRY</scope>
</reference>
<reference key="13">
    <citation type="journal article" date="2017" name="Proc. Natl. Acad. Sci. U.S.A.">
        <title>Interference of the complex between NCS-1 and Ric8a with phenothiazines regulates synaptic function and is an approach for fragile X syndrome.</title>
        <authorList>
            <person name="Mansilla A."/>
            <person name="Chaves-Sanjuan A."/>
            <person name="Campillo N.E."/>
            <person name="Semelidou O."/>
            <person name="Martinez-Gonzalez L."/>
            <person name="Infantes L."/>
            <person name="Gonzalez-Rubio J.M."/>
            <person name="Gil C."/>
            <person name="Conde S."/>
            <person name="Skoulakis E.M."/>
            <person name="Ferrus A."/>
            <person name="Martinez A."/>
            <person name="Sanchez-Barrena M.J."/>
        </authorList>
    </citation>
    <scope>INTERACTION WITH RIC8A</scope>
    <scope>PHARMACEUTICAL</scope>
    <scope>MUTAGENESIS OF GLY-2</scope>
</reference>
<reference key="14">
    <citation type="journal article" date="2018" name="J. Med. Chem.">
        <title>Deciphering the Inhibition of the Neuronal Calcium Sensor 1 and the Guanine Exchange Factor Ric8a with a Small Phenothiazine Molecule for the Rational Generation of Therapeutic Synapse Function Regulators.</title>
        <authorList>
            <person name="Roca C."/>
            <person name="Martinez-Gonzalez L."/>
            <person name="Daniel-Mozo M."/>
            <person name="Sastre J."/>
            <person name="Infantes L."/>
            <person name="Mansilla A."/>
            <person name="Chaves-Sanjuan A."/>
            <person name="Gonzalez-Rubio J.M."/>
            <person name="Gil C."/>
            <person name="Canada F.J."/>
            <person name="Martinez A."/>
            <person name="Sanchez-Barrena M.J."/>
            <person name="Campillo N.E."/>
        </authorList>
    </citation>
    <scope>INTERACTION WITH RIC8A</scope>
</reference>
<reference key="15">
    <citation type="journal article" date="2001" name="J. Biol. Chem.">
        <title>Immunocytochemical localization and crystal structure of human frequenin (neuronal calcium sensor 1).</title>
        <authorList>
            <person name="Bourne Y."/>
            <person name="Dannenberg J."/>
            <person name="Pollmann V."/>
            <person name="Marchot P."/>
            <person name="Pongs O."/>
        </authorList>
    </citation>
    <scope>X-RAY CRYSTALLOGRAPHY (1.9 ANGSTROMS)</scope>
    <scope>MUTAGENESIS OF GLU-81; THR-117 AND THR-165</scope>
    <scope>CALCIUM-BINDING</scope>
    <scope>SUBCELLULAR LOCATION</scope>
</reference>
<comment type="function">
    <text evidence="1">Neuronal calcium sensor, regulator of G protein-coupled receptor phosphorylation in a calcium dependent manner. Directly regulates GRK1 (RHOK), but not GRK2 to GRK5. Can substitute for calmodulin (By similarity). Stimulates PI4KB kinase activity (By similarity). Involved in long-term synaptic plasticity through its interaction with PICK1 (By similarity). May also play a role in neuron differentiation through inhibition of the activity of N-type voltage-gated calcium channel (By similarity).</text>
</comment>
<comment type="subunit">
    <text evidence="2 5 6 7 8 10 11">Monomer (By similarity). Interacts with KCND2 (PubMed:11606724). Interacts in a calcium-independent manner with PI4KB (By similarity). This binding competes with CALN2/CABP7 binding to PI4KB (By similarity). Interacts in a calcium-dependent manner with PICK1 (via AH domain) (By similarity). Interacts with ARF1, ARF3, ARF5 and ARF6 (PubMed:17555535). Interacts with IL1RAPL1 (PubMed:12783849). Interacts with RIC8A; interaction is favored in the absence of Ca(2+) and myristoylation of NCS1 is not required (PubMed:25074811, PubMed:28119500, PubMed:29966094).</text>
</comment>
<comment type="interaction">
    <interactant intactId="EBI-746987">
        <id>P62166</id>
    </interactant>
    <interactant intactId="EBI-2817707">
        <id>Q9BXJ5</id>
        <label>C1QTNF2</label>
    </interactant>
    <organismsDiffer>false</organismsDiffer>
    <experiments>3</experiments>
</comment>
<comment type="interaction">
    <interactant intactId="EBI-746987">
        <id>P62166</id>
    </interactant>
    <interactant intactId="EBI-11144046">
        <id>Q96ST8-3</id>
        <label>CEP89</label>
    </interactant>
    <organismsDiffer>false</organismsDiffer>
    <experiments>4</experiments>
</comment>
<comment type="interaction">
    <interactant intactId="EBI-746987">
        <id>P62166</id>
    </interactant>
    <interactant intactId="EBI-12884642">
        <id>Q03060-25</id>
        <label>CREM</label>
    </interactant>
    <organismsDiffer>false</organismsDiffer>
    <experiments>3</experiments>
</comment>
<comment type="interaction">
    <interactant intactId="EBI-746987">
        <id>P62166</id>
    </interactant>
    <interactant intactId="EBI-1188472">
        <id>P78358</id>
        <label>CTAG1B</label>
    </interactant>
    <organismsDiffer>false</organismsDiffer>
    <experiments>3</experiments>
</comment>
<comment type="interaction">
    <interactant intactId="EBI-746987">
        <id>P62166</id>
    </interactant>
    <interactant intactId="EBI-740376">
        <id>Q86UW9</id>
        <label>DTX2</label>
    </interactant>
    <organismsDiffer>false</organismsDiffer>
    <experiments>13</experiments>
</comment>
<comment type="interaction">
    <interactant intactId="EBI-746987">
        <id>P62166</id>
    </interactant>
    <interactant intactId="EBI-746917">
        <id>O75084</id>
        <label>FZD7</label>
    </interactant>
    <organismsDiffer>false</organismsDiffer>
    <experiments>5</experiments>
</comment>
<comment type="interaction">
    <interactant intactId="EBI-746987">
        <id>P62166</id>
    </interactant>
    <interactant intactId="EBI-2932988">
        <id>P37058</id>
        <label>HSD17B3</label>
    </interactant>
    <organismsDiffer>false</organismsDiffer>
    <experiments>3</experiments>
</comment>
<comment type="interaction">
    <interactant intactId="EBI-746987">
        <id>P62166</id>
    </interactant>
    <interactant intactId="EBI-12382527">
        <id>O95868</id>
        <label>LY6G6D</label>
    </interactant>
    <organismsDiffer>false</organismsDiffer>
    <experiments>3</experiments>
</comment>
<comment type="interaction">
    <interactant intactId="EBI-746987">
        <id>P62166</id>
    </interactant>
    <interactant intactId="EBI-16439278">
        <id>Q6FHY5</id>
        <label>MEOX2</label>
    </interactant>
    <organismsDiffer>false</organismsDiffer>
    <experiments>3</experiments>
</comment>
<comment type="interaction">
    <interactant intactId="EBI-746987">
        <id>P62166</id>
    </interactant>
    <interactant intactId="EBI-11988931">
        <id>Q96C03-3</id>
        <label>MIEF2</label>
    </interactant>
    <organismsDiffer>false</organismsDiffer>
    <experiments>3</experiments>
</comment>
<comment type="interaction">
    <interactant intactId="EBI-746987">
        <id>P62166</id>
    </interactant>
    <interactant intactId="EBI-10208650">
        <id>P41271</id>
        <label>NBL1</label>
    </interactant>
    <organismsDiffer>false</organismsDiffer>
    <experiments>3</experiments>
</comment>
<comment type="interaction">
    <interactant intactId="EBI-746987">
        <id>P62166</id>
    </interactant>
    <interactant intactId="EBI-12813389">
        <id>Q8TDS5</id>
        <label>OXER1</label>
    </interactant>
    <organismsDiffer>false</organismsDiffer>
    <experiments>3</experiments>
</comment>
<comment type="interaction">
    <interactant intactId="EBI-746987">
        <id>P62166</id>
    </interactant>
    <interactant intactId="EBI-2803427">
        <id>Q9UKN5</id>
        <label>PRDM4</label>
    </interactant>
    <organismsDiffer>false</organismsDiffer>
    <experiments>3</experiments>
</comment>
<comment type="interaction">
    <interactant intactId="EBI-746987">
        <id>P62166</id>
    </interactant>
    <interactant intactId="EBI-2372399">
        <id>O60930</id>
        <label>RNASEH1</label>
    </interactant>
    <organismsDiffer>false</organismsDiffer>
    <experiments>3</experiments>
</comment>
<comment type="interaction">
    <interactant intactId="EBI-746987">
        <id>P62166</id>
    </interactant>
    <interactant intactId="EBI-12350685">
        <id>Q8IWL1</id>
        <label>SFTPA2</label>
    </interactant>
    <organismsDiffer>false</organismsDiffer>
    <experiments>3</experiments>
</comment>
<comment type="interaction">
    <interactant intactId="EBI-746987">
        <id>P62166</id>
    </interactant>
    <interactant intactId="EBI-12857926">
        <id>Q9Y336</id>
        <label>SIGLEC9</label>
    </interactant>
    <organismsDiffer>false</organismsDiffer>
    <experiments>3</experiments>
</comment>
<comment type="interaction">
    <interactant intactId="EBI-746987">
        <id>P62166</id>
    </interactant>
    <interactant intactId="EBI-723648">
        <id>P10451</id>
        <label>SPP1</label>
    </interactant>
    <organismsDiffer>false</organismsDiffer>
    <experiments>3</experiments>
</comment>
<comment type="interaction">
    <interactant intactId="EBI-746987">
        <id>P62166</id>
    </interactant>
    <interactant intactId="EBI-7082156">
        <id>Q7Z698</id>
        <label>SPRED2</label>
    </interactant>
    <organismsDiffer>false</organismsDiffer>
    <experiments>3</experiments>
</comment>
<comment type="interaction">
    <interactant intactId="EBI-746987">
        <id>P62166</id>
    </interactant>
    <interactant intactId="EBI-742550">
        <id>Q96K80</id>
        <label>ZC3H10</label>
    </interactant>
    <organismsDiffer>false</organismsDiffer>
    <experiments>3</experiments>
</comment>
<comment type="interaction">
    <interactant intactId="EBI-746987">
        <id>P62166</id>
    </interactant>
    <interactant intactId="EBI-17234977">
        <id>A0A1U9X8X8</id>
    </interactant>
    <organismsDiffer>false</organismsDiffer>
    <experiments>3</experiments>
</comment>
<comment type="subcellular location">
    <subcellularLocation>
        <location evidence="7">Golgi apparatus</location>
    </subcellularLocation>
    <subcellularLocation>
        <location evidence="13">Postsynaptic density</location>
    </subcellularLocation>
    <subcellularLocation>
        <location evidence="4 7">Cytoplasm</location>
        <location evidence="4 7">Perinuclear region</location>
    </subcellularLocation>
    <subcellularLocation>
        <location evidence="2">Cytoplasm</location>
    </subcellularLocation>
    <subcellularLocation>
        <location evidence="7">Cell membrane</location>
        <topology>Peripheral membrane protein</topology>
    </subcellularLocation>
    <subcellularLocation>
        <location evidence="2">Membrane</location>
        <topology evidence="13">Lipid-anchor</topology>
    </subcellularLocation>
    <text evidence="13 14">Associated with Golgi stacks. Post-synaptic densities of dendrites, and in the pre-synaptic nerve terminal at neuromuscular junctions.</text>
</comment>
<comment type="alternative products">
    <event type="alternative splicing"/>
    <isoform>
        <id>P62166-1</id>
        <name>1</name>
        <sequence type="displayed"/>
    </isoform>
    <isoform>
        <id>P62166-2</id>
        <name>2</name>
        <sequence type="described" ref="VSP_046312"/>
    </isoform>
</comment>
<comment type="pharmaceutical">
    <text evidence="10 11">Phenothiazine FD44 disrupts the interaction of NCS1 with RIC8A (PubMed:28119500). Binding of FD44 to the Drosophila NCS1 ortholog Frq2 leads to reduction of synapse number to normal levels and restoration of normal learning performance in a Drosophila model of fragile X syndrome, suggesting that the NCS1/RIC8A interaction interface may be a suitable target for the treatment of fragile X and other synaptopathies (PubMed:28119500). The small drug-like molecule IGS-1.76 binds to NCS1 with higher affinity than FD44 does and acts as a potent inhibitor of NCS1 interaction with RIC8A (PubMed:29966094).</text>
</comment>
<comment type="miscellaneous">
    <text>Binds 3 calcium ions via the second, third and fourth EF-hand.</text>
</comment>
<comment type="similarity">
    <text evidence="13">Belongs to the recoverin family.</text>
</comment>
<gene>
    <name type="primary">NCS1</name>
    <name type="synonym">FLUP</name>
    <name type="synonym">FREQ</name>
</gene>
<sequence>MGKSNSKLKPEVVEELTRKTYFTEKEVQQWYKGFIKDCPSGQLDAAGFQKIYKQFFPFGDPTKFATFVFNVFDENKDGRIEFSEFIQALSVTSRGTLDEKLRWAFKLYDLDNDGYITRNEMLDIVDAIYQMVGNTVELPEEENTPEKRVDRIFAMMDKNADGKLTLQEFQEGSKADPSIVQALSLYDGLV</sequence>
<name>NCS1_HUMAN</name>
<accession>P62166</accession>
<accession>E9PAY3</accession>
<accession>P36610</accession>
<accession>Q9UK26</accession>
<protein>
    <recommendedName>
        <fullName>Neuronal calcium sensor 1</fullName>
        <shortName>NCS-1</shortName>
    </recommendedName>
    <alternativeName>
        <fullName>Frequenin homolog</fullName>
    </alternativeName>
    <alternativeName>
        <fullName>Frequenin-like protein</fullName>
    </alternativeName>
    <alternativeName>
        <fullName>Frequenin-like ubiquitous protein</fullName>
    </alternativeName>
</protein>
<evidence type="ECO:0000250" key="1"/>
<evidence type="ECO:0000250" key="2">
    <source>
        <dbReference type="UniProtKB" id="P62168"/>
    </source>
</evidence>
<evidence type="ECO:0000255" key="3">
    <source>
        <dbReference type="PROSITE-ProRule" id="PRU00448"/>
    </source>
</evidence>
<evidence type="ECO:0000269" key="4">
    <source>
    </source>
</evidence>
<evidence type="ECO:0000269" key="5">
    <source>
    </source>
</evidence>
<evidence type="ECO:0000269" key="6">
    <source>
    </source>
</evidence>
<evidence type="ECO:0000269" key="7">
    <source>
    </source>
</evidence>
<evidence type="ECO:0000269" key="8">
    <source>
    </source>
</evidence>
<evidence type="ECO:0000269" key="9">
    <source>
    </source>
</evidence>
<evidence type="ECO:0000269" key="10">
    <source>
    </source>
</evidence>
<evidence type="ECO:0000269" key="11">
    <source>
    </source>
</evidence>
<evidence type="ECO:0000303" key="12">
    <source>
    </source>
</evidence>
<evidence type="ECO:0000305" key="13"/>
<evidence type="ECO:0000305" key="14">
    <source>
    </source>
</evidence>
<evidence type="ECO:0007829" key="15">
    <source>
        <dbReference type="PDB" id="2LCP"/>
    </source>
</evidence>
<evidence type="ECO:0007829" key="16">
    <source>
        <dbReference type="PDB" id="4GUK"/>
    </source>
</evidence>
<evidence type="ECO:0007829" key="17">
    <source>
        <dbReference type="PDB" id="6QI4"/>
    </source>
</evidence>
<evidence type="ECO:0007829" key="18">
    <source>
        <dbReference type="PDB" id="8AHY"/>
    </source>
</evidence>
<organism>
    <name type="scientific">Homo sapiens</name>
    <name type="common">Human</name>
    <dbReference type="NCBI Taxonomy" id="9606"/>
    <lineage>
        <taxon>Eukaryota</taxon>
        <taxon>Metazoa</taxon>
        <taxon>Chordata</taxon>
        <taxon>Craniata</taxon>
        <taxon>Vertebrata</taxon>
        <taxon>Euteleostomi</taxon>
        <taxon>Mammalia</taxon>
        <taxon>Eutheria</taxon>
        <taxon>Euarchontoglires</taxon>
        <taxon>Primates</taxon>
        <taxon>Haplorrhini</taxon>
        <taxon>Catarrhini</taxon>
        <taxon>Hominidae</taxon>
        <taxon>Homo</taxon>
    </lineage>
</organism>
<dbReference type="EMBL" id="X84048">
    <property type="protein sequence ID" value="CAA58867.1"/>
    <property type="molecule type" value="mRNA"/>
</dbReference>
<dbReference type="EMBL" id="AF134479">
    <property type="protein sequence ID" value="AAP97256.1"/>
    <property type="molecule type" value="mRNA"/>
</dbReference>
<dbReference type="EMBL" id="AF186409">
    <property type="protein sequence ID" value="AAF01804.1"/>
    <property type="molecule type" value="mRNA"/>
</dbReference>
<dbReference type="EMBL" id="AL360004">
    <property type="status" value="NOT_ANNOTATED_CDS"/>
    <property type="molecule type" value="Genomic_DNA"/>
</dbReference>
<dbReference type="EMBL" id="BC004856">
    <property type="protein sequence ID" value="AAH04856.1"/>
    <property type="molecule type" value="mRNA"/>
</dbReference>
<dbReference type="EMBL" id="BQ880305">
    <property type="status" value="NOT_ANNOTATED_CDS"/>
    <property type="molecule type" value="mRNA"/>
</dbReference>
<dbReference type="CCDS" id="CCDS6932.1">
    <molecule id="P62166-1"/>
</dbReference>
<dbReference type="CCDS" id="CCDS78448.1">
    <molecule id="P62166-2"/>
</dbReference>
<dbReference type="RefSeq" id="NP_001122298.1">
    <molecule id="P62166-2"/>
    <property type="nucleotide sequence ID" value="NM_001128826.2"/>
</dbReference>
<dbReference type="RefSeq" id="NP_055101.2">
    <molecule id="P62166-1"/>
    <property type="nucleotide sequence ID" value="NM_014286.3"/>
</dbReference>
<dbReference type="PDB" id="1G8I">
    <property type="method" value="X-ray"/>
    <property type="resolution" value="1.90 A"/>
    <property type="chains" value="A/B=1-190"/>
</dbReference>
<dbReference type="PDB" id="2LCP">
    <property type="method" value="NMR"/>
    <property type="chains" value="A=1-190"/>
</dbReference>
<dbReference type="PDB" id="4GUK">
    <property type="method" value="X-ray"/>
    <property type="resolution" value="1.75 A"/>
    <property type="chains" value="A/B/C/D=6-188"/>
</dbReference>
<dbReference type="PDB" id="5O9S">
    <property type="method" value="X-ray"/>
    <property type="resolution" value="2.70 A"/>
    <property type="chains" value="C/D=2-9"/>
</dbReference>
<dbReference type="PDB" id="6QI4">
    <property type="method" value="X-ray"/>
    <property type="resolution" value="1.78 A"/>
    <property type="chains" value="B/C=1-190"/>
</dbReference>
<dbReference type="PDB" id="8AHY">
    <property type="method" value="X-ray"/>
    <property type="resolution" value="1.70 A"/>
    <property type="chains" value="B=1-177"/>
</dbReference>
<dbReference type="PDB" id="8ALH">
    <property type="method" value="X-ray"/>
    <property type="resolution" value="1.86 A"/>
    <property type="chains" value="B=1-177"/>
</dbReference>
<dbReference type="PDB" id="8ALM">
    <property type="method" value="X-ray"/>
    <property type="resolution" value="1.85 A"/>
    <property type="chains" value="B=1-177"/>
</dbReference>
<dbReference type="PDBsum" id="1G8I"/>
<dbReference type="PDBsum" id="2LCP"/>
<dbReference type="PDBsum" id="4GUK"/>
<dbReference type="PDBsum" id="5O9S"/>
<dbReference type="PDBsum" id="6QI4"/>
<dbReference type="PDBsum" id="8AHY"/>
<dbReference type="PDBsum" id="8ALH"/>
<dbReference type="PDBsum" id="8ALM"/>
<dbReference type="BMRB" id="P62166"/>
<dbReference type="SMR" id="P62166"/>
<dbReference type="BioGRID" id="116985">
    <property type="interactions" value="83"/>
</dbReference>
<dbReference type="FunCoup" id="P62166">
    <property type="interactions" value="755"/>
</dbReference>
<dbReference type="IntAct" id="P62166">
    <property type="interactions" value="64"/>
</dbReference>
<dbReference type="MINT" id="P62166"/>
<dbReference type="STRING" id="9606.ENSP00000361475"/>
<dbReference type="BindingDB" id="P62166"/>
<dbReference type="ChEMBL" id="CHEMBL4295788"/>
<dbReference type="DrugBank" id="DB11093">
    <property type="generic name" value="Calcium citrate"/>
</dbReference>
<dbReference type="DrugBank" id="DB11348">
    <property type="generic name" value="Calcium Phosphate"/>
</dbReference>
<dbReference type="DrugBank" id="DB14481">
    <property type="generic name" value="Calcium phosphate dihydrate"/>
</dbReference>
<dbReference type="iPTMnet" id="P62166"/>
<dbReference type="PhosphoSitePlus" id="P62166"/>
<dbReference type="BioMuta" id="NCS1"/>
<dbReference type="DMDM" id="49065666"/>
<dbReference type="jPOST" id="P62166"/>
<dbReference type="MassIVE" id="P62166"/>
<dbReference type="PaxDb" id="9606-ENSP00000361475"/>
<dbReference type="PeptideAtlas" id="P62166"/>
<dbReference type="ProteomicsDB" id="19104"/>
<dbReference type="ProteomicsDB" id="57369">
    <molecule id="P62166-1"/>
</dbReference>
<dbReference type="Pumba" id="P62166"/>
<dbReference type="TopDownProteomics" id="P62166-1">
    <molecule id="P62166-1"/>
</dbReference>
<dbReference type="Antibodypedia" id="4347">
    <property type="antibodies" value="375 antibodies from 38 providers"/>
</dbReference>
<dbReference type="DNASU" id="23413"/>
<dbReference type="Ensembl" id="ENST00000372398.6">
    <molecule id="P62166-1"/>
    <property type="protein sequence ID" value="ENSP00000361475.3"/>
    <property type="gene ID" value="ENSG00000107130.10"/>
</dbReference>
<dbReference type="Ensembl" id="ENST00000630865.1">
    <molecule id="P62166-2"/>
    <property type="protein sequence ID" value="ENSP00000486695.1"/>
    <property type="gene ID" value="ENSG00000107130.10"/>
</dbReference>
<dbReference type="GeneID" id="23413"/>
<dbReference type="KEGG" id="hsa:23413"/>
<dbReference type="MANE-Select" id="ENST00000372398.6">
    <property type="protein sequence ID" value="ENSP00000361475.3"/>
    <property type="RefSeq nucleotide sequence ID" value="NM_014286.4"/>
    <property type="RefSeq protein sequence ID" value="NP_055101.2"/>
</dbReference>
<dbReference type="UCSC" id="uc004bzi.2">
    <molecule id="P62166-1"/>
    <property type="organism name" value="human"/>
</dbReference>
<dbReference type="AGR" id="HGNC:3953"/>
<dbReference type="CTD" id="23413"/>
<dbReference type="DisGeNET" id="23413"/>
<dbReference type="GeneCards" id="NCS1"/>
<dbReference type="HGNC" id="HGNC:3953">
    <property type="gene designation" value="NCS1"/>
</dbReference>
<dbReference type="HPA" id="ENSG00000107130">
    <property type="expression patterns" value="Tissue enhanced (brain)"/>
</dbReference>
<dbReference type="MalaCards" id="NCS1"/>
<dbReference type="MIM" id="603315">
    <property type="type" value="gene"/>
</dbReference>
<dbReference type="neXtProt" id="NX_P62166"/>
<dbReference type="OpenTargets" id="ENSG00000107130"/>
<dbReference type="PharmGKB" id="PA28371"/>
<dbReference type="VEuPathDB" id="HostDB:ENSG00000107130"/>
<dbReference type="eggNOG" id="KOG0044">
    <property type="taxonomic scope" value="Eukaryota"/>
</dbReference>
<dbReference type="GeneTree" id="ENSGT00940000154645"/>
<dbReference type="HOGENOM" id="CLU_072366_1_2_1"/>
<dbReference type="InParanoid" id="P62166"/>
<dbReference type="OMA" id="EYVFNVF"/>
<dbReference type="OrthoDB" id="191686at2759"/>
<dbReference type="PAN-GO" id="P62166">
    <property type="GO annotations" value="2 GO annotations based on evolutionary models"/>
</dbReference>
<dbReference type="PhylomeDB" id="P62166"/>
<dbReference type="TreeFam" id="TF300009"/>
<dbReference type="PathwayCommons" id="P62166"/>
<dbReference type="SignaLink" id="P62166"/>
<dbReference type="SIGNOR" id="P62166"/>
<dbReference type="BioGRID-ORCS" id="23413">
    <property type="hits" value="9 hits in 1147 CRISPR screens"/>
</dbReference>
<dbReference type="ChiTaRS" id="NCS1">
    <property type="organism name" value="human"/>
</dbReference>
<dbReference type="EvolutionaryTrace" id="P62166"/>
<dbReference type="GeneWiki" id="Neuronal_calcium_sensor-1"/>
<dbReference type="GenomeRNAi" id="23413"/>
<dbReference type="Pharos" id="P62166">
    <property type="development level" value="Tbio"/>
</dbReference>
<dbReference type="PRO" id="PR:P62166"/>
<dbReference type="Proteomes" id="UP000005640">
    <property type="component" value="Chromosome 9"/>
</dbReference>
<dbReference type="RNAct" id="P62166">
    <property type="molecule type" value="protein"/>
</dbReference>
<dbReference type="Bgee" id="ENSG00000107130">
    <property type="expression patterns" value="Expressed in right frontal lobe and 157 other cell types or tissues"/>
</dbReference>
<dbReference type="ExpressionAtlas" id="P62166">
    <property type="expression patterns" value="baseline and differential"/>
</dbReference>
<dbReference type="GO" id="GO:0030424">
    <property type="term" value="C:axon"/>
    <property type="evidence" value="ECO:0007669"/>
    <property type="project" value="Ensembl"/>
</dbReference>
<dbReference type="GO" id="GO:0005737">
    <property type="term" value="C:cytoplasm"/>
    <property type="evidence" value="ECO:0000314"/>
    <property type="project" value="UniProtKB"/>
</dbReference>
<dbReference type="GO" id="GO:0005829">
    <property type="term" value="C:cytosol"/>
    <property type="evidence" value="ECO:0000314"/>
    <property type="project" value="HPA"/>
</dbReference>
<dbReference type="GO" id="GO:0030425">
    <property type="term" value="C:dendrite"/>
    <property type="evidence" value="ECO:0007669"/>
    <property type="project" value="Ensembl"/>
</dbReference>
<dbReference type="GO" id="GO:0005794">
    <property type="term" value="C:Golgi apparatus"/>
    <property type="evidence" value="ECO:0007669"/>
    <property type="project" value="UniProtKB-SubCell"/>
</dbReference>
<dbReference type="GO" id="GO:0043231">
    <property type="term" value="C:intracellular membrane-bounded organelle"/>
    <property type="evidence" value="ECO:0000314"/>
    <property type="project" value="HPA"/>
</dbReference>
<dbReference type="GO" id="GO:0048471">
    <property type="term" value="C:perinuclear region of cytoplasm"/>
    <property type="evidence" value="ECO:0007669"/>
    <property type="project" value="UniProtKB-SubCell"/>
</dbReference>
<dbReference type="GO" id="GO:0005886">
    <property type="term" value="C:plasma membrane"/>
    <property type="evidence" value="ECO:0000314"/>
    <property type="project" value="HPA"/>
</dbReference>
<dbReference type="GO" id="GO:0014069">
    <property type="term" value="C:postsynaptic density"/>
    <property type="evidence" value="ECO:0007669"/>
    <property type="project" value="UniProtKB-SubCell"/>
</dbReference>
<dbReference type="GO" id="GO:0005509">
    <property type="term" value="F:calcium ion binding"/>
    <property type="evidence" value="ECO:0000318"/>
    <property type="project" value="GO_Central"/>
</dbReference>
<dbReference type="GO" id="GO:0008048">
    <property type="term" value="F:calcium sensitive guanylate cyclase activator activity"/>
    <property type="evidence" value="ECO:0000318"/>
    <property type="project" value="GO_Central"/>
</dbReference>
<dbReference type="GO" id="GO:0005245">
    <property type="term" value="F:voltage-gated calcium channel activity"/>
    <property type="evidence" value="ECO:0000250"/>
    <property type="project" value="UniProtKB"/>
</dbReference>
<dbReference type="GO" id="GO:0010975">
    <property type="term" value="P:regulation of neuron projection development"/>
    <property type="evidence" value="ECO:0000250"/>
    <property type="project" value="UniProtKB"/>
</dbReference>
<dbReference type="GO" id="GO:0009966">
    <property type="term" value="P:regulation of signal transduction"/>
    <property type="evidence" value="ECO:0000318"/>
    <property type="project" value="GO_Central"/>
</dbReference>
<dbReference type="CDD" id="cd00051">
    <property type="entry name" value="EFh"/>
    <property type="match status" value="2"/>
</dbReference>
<dbReference type="FunFam" id="1.10.238.10:FF:000009">
    <property type="entry name" value="Visinin-like protein 1"/>
    <property type="match status" value="1"/>
</dbReference>
<dbReference type="Gene3D" id="1.10.238.10">
    <property type="entry name" value="EF-hand"/>
    <property type="match status" value="1"/>
</dbReference>
<dbReference type="InterPro" id="IPR011992">
    <property type="entry name" value="EF-hand-dom_pair"/>
</dbReference>
<dbReference type="InterPro" id="IPR018247">
    <property type="entry name" value="EF_Hand_1_Ca_BS"/>
</dbReference>
<dbReference type="InterPro" id="IPR002048">
    <property type="entry name" value="EF_hand_dom"/>
</dbReference>
<dbReference type="InterPro" id="IPR028846">
    <property type="entry name" value="Recoverin"/>
</dbReference>
<dbReference type="PANTHER" id="PTHR23055">
    <property type="entry name" value="CALCIUM BINDING PROTEINS"/>
    <property type="match status" value="1"/>
</dbReference>
<dbReference type="PANTHER" id="PTHR23055:SF198">
    <property type="entry name" value="NEURONAL CALCIUM SENSOR 1"/>
    <property type="match status" value="1"/>
</dbReference>
<dbReference type="Pfam" id="PF00036">
    <property type="entry name" value="EF-hand_1"/>
    <property type="match status" value="1"/>
</dbReference>
<dbReference type="Pfam" id="PF13499">
    <property type="entry name" value="EF-hand_7"/>
    <property type="match status" value="1"/>
</dbReference>
<dbReference type="PRINTS" id="PR00450">
    <property type="entry name" value="RECOVERIN"/>
</dbReference>
<dbReference type="SMART" id="SM00054">
    <property type="entry name" value="EFh"/>
    <property type="match status" value="3"/>
</dbReference>
<dbReference type="SUPFAM" id="SSF47473">
    <property type="entry name" value="EF-hand"/>
    <property type="match status" value="1"/>
</dbReference>
<dbReference type="PROSITE" id="PS00018">
    <property type="entry name" value="EF_HAND_1"/>
    <property type="match status" value="3"/>
</dbReference>
<dbReference type="PROSITE" id="PS50222">
    <property type="entry name" value="EF_HAND_2"/>
    <property type="match status" value="3"/>
</dbReference>
<proteinExistence type="evidence at protein level"/>